<protein>
    <recommendedName>
        <fullName evidence="1">Urease accessory protein UreE</fullName>
    </recommendedName>
</protein>
<comment type="function">
    <text evidence="1">Involved in urease metallocenter assembly. Binds nickel. Probably functions as a nickel donor during metallocenter assembly.</text>
</comment>
<comment type="subcellular location">
    <subcellularLocation>
        <location evidence="1">Cytoplasm</location>
    </subcellularLocation>
</comment>
<comment type="similarity">
    <text evidence="1">Belongs to the UreE family.</text>
</comment>
<accession>Q2FEK2</accession>
<dbReference type="EMBL" id="CP000255">
    <property type="protein sequence ID" value="ABD21916.1"/>
    <property type="molecule type" value="Genomic_DNA"/>
</dbReference>
<dbReference type="RefSeq" id="WP_000634589.1">
    <property type="nucleotide sequence ID" value="NZ_CP027476.1"/>
</dbReference>
<dbReference type="SMR" id="Q2FEK2"/>
<dbReference type="KEGG" id="saa:SAUSA300_2241"/>
<dbReference type="HOGENOM" id="CLU_093757_3_1_9"/>
<dbReference type="OMA" id="YVDLEWF"/>
<dbReference type="Proteomes" id="UP000001939">
    <property type="component" value="Chromosome"/>
</dbReference>
<dbReference type="GO" id="GO:0005737">
    <property type="term" value="C:cytoplasm"/>
    <property type="evidence" value="ECO:0007669"/>
    <property type="project" value="UniProtKB-SubCell"/>
</dbReference>
<dbReference type="GO" id="GO:0016151">
    <property type="term" value="F:nickel cation binding"/>
    <property type="evidence" value="ECO:0007669"/>
    <property type="project" value="UniProtKB-UniRule"/>
</dbReference>
<dbReference type="GO" id="GO:0051082">
    <property type="term" value="F:unfolded protein binding"/>
    <property type="evidence" value="ECO:0007669"/>
    <property type="project" value="UniProtKB-UniRule"/>
</dbReference>
<dbReference type="GO" id="GO:0006457">
    <property type="term" value="P:protein folding"/>
    <property type="evidence" value="ECO:0007669"/>
    <property type="project" value="InterPro"/>
</dbReference>
<dbReference type="GO" id="GO:0065003">
    <property type="term" value="P:protein-containing complex assembly"/>
    <property type="evidence" value="ECO:0007669"/>
    <property type="project" value="InterPro"/>
</dbReference>
<dbReference type="GO" id="GO:0019627">
    <property type="term" value="P:urea metabolic process"/>
    <property type="evidence" value="ECO:0007669"/>
    <property type="project" value="InterPro"/>
</dbReference>
<dbReference type="CDD" id="cd00571">
    <property type="entry name" value="UreE"/>
    <property type="match status" value="1"/>
</dbReference>
<dbReference type="Gene3D" id="2.60.260.20">
    <property type="entry name" value="Urease metallochaperone UreE, N-terminal domain"/>
    <property type="match status" value="1"/>
</dbReference>
<dbReference type="Gene3D" id="3.30.70.790">
    <property type="entry name" value="UreE, C-terminal domain"/>
    <property type="match status" value="1"/>
</dbReference>
<dbReference type="HAMAP" id="MF_00822">
    <property type="entry name" value="UreE"/>
    <property type="match status" value="1"/>
</dbReference>
<dbReference type="InterPro" id="IPR012406">
    <property type="entry name" value="UreE"/>
</dbReference>
<dbReference type="InterPro" id="IPR007864">
    <property type="entry name" value="UreE_C_dom"/>
</dbReference>
<dbReference type="InterPro" id="IPR004029">
    <property type="entry name" value="UreE_N"/>
</dbReference>
<dbReference type="InterPro" id="IPR036118">
    <property type="entry name" value="UreE_N_sf"/>
</dbReference>
<dbReference type="NCBIfam" id="NF009755">
    <property type="entry name" value="PRK13261.2-1"/>
    <property type="match status" value="1"/>
</dbReference>
<dbReference type="Pfam" id="PF05194">
    <property type="entry name" value="UreE_C"/>
    <property type="match status" value="1"/>
</dbReference>
<dbReference type="Pfam" id="PF02814">
    <property type="entry name" value="UreE_N"/>
    <property type="match status" value="1"/>
</dbReference>
<dbReference type="PIRSF" id="PIRSF036402">
    <property type="entry name" value="Ureas_acces_UreE"/>
    <property type="match status" value="1"/>
</dbReference>
<dbReference type="SMART" id="SM00988">
    <property type="entry name" value="UreE_N"/>
    <property type="match status" value="1"/>
</dbReference>
<dbReference type="SUPFAM" id="SSF69737">
    <property type="entry name" value="Urease metallochaperone UreE, C-terminal domain"/>
    <property type="match status" value="1"/>
</dbReference>
<dbReference type="SUPFAM" id="SSF69287">
    <property type="entry name" value="Urease metallochaperone UreE, N-terminal domain"/>
    <property type="match status" value="1"/>
</dbReference>
<feature type="chain" id="PRO_1000062562" description="Urease accessory protein UreE">
    <location>
        <begin position="1"/>
        <end position="150"/>
    </location>
</feature>
<keyword id="KW-0143">Chaperone</keyword>
<keyword id="KW-0963">Cytoplasm</keyword>
<keyword id="KW-0533">Nickel</keyword>
<keyword id="KW-0996">Nickel insertion</keyword>
<proteinExistence type="inferred from homology"/>
<sequence length="150" mass="17340">MIVEEIQGNIANLSNSEKQKHVEKVYLENSDLVKRIQRVVTDHGTEIGIRLKQPIDLQYGDILYADDHNMIIVDVNSEDLLVIQPRTLQEMGDIAHQLGNRHLPAQFTETEMLVQYDYLVEDLLKSLGIPYVREDRKVNKAFRHIGHSHD</sequence>
<evidence type="ECO:0000255" key="1">
    <source>
        <dbReference type="HAMAP-Rule" id="MF_00822"/>
    </source>
</evidence>
<gene>
    <name evidence="1" type="primary">ureE</name>
    <name type="ordered locus">SAUSA300_2241</name>
</gene>
<name>UREE_STAA3</name>
<reference key="1">
    <citation type="journal article" date="2006" name="Lancet">
        <title>Complete genome sequence of USA300, an epidemic clone of community-acquired meticillin-resistant Staphylococcus aureus.</title>
        <authorList>
            <person name="Diep B.A."/>
            <person name="Gill S.R."/>
            <person name="Chang R.F."/>
            <person name="Phan T.H."/>
            <person name="Chen J.H."/>
            <person name="Davidson M.G."/>
            <person name="Lin F."/>
            <person name="Lin J."/>
            <person name="Carleton H.A."/>
            <person name="Mongodin E.F."/>
            <person name="Sensabaugh G.F."/>
            <person name="Perdreau-Remington F."/>
        </authorList>
    </citation>
    <scope>NUCLEOTIDE SEQUENCE [LARGE SCALE GENOMIC DNA]</scope>
    <source>
        <strain>USA300</strain>
    </source>
</reference>
<organism>
    <name type="scientific">Staphylococcus aureus (strain USA300)</name>
    <dbReference type="NCBI Taxonomy" id="367830"/>
    <lineage>
        <taxon>Bacteria</taxon>
        <taxon>Bacillati</taxon>
        <taxon>Bacillota</taxon>
        <taxon>Bacilli</taxon>
        <taxon>Bacillales</taxon>
        <taxon>Staphylococcaceae</taxon>
        <taxon>Staphylococcus</taxon>
    </lineage>
</organism>